<gene>
    <name evidence="1" type="primary">greA</name>
    <name type="ordered locus">Rv1080c</name>
    <name type="ORF">MTV017.33c</name>
</gene>
<organism>
    <name type="scientific">Mycobacterium tuberculosis (strain ATCC 25618 / H37Rv)</name>
    <dbReference type="NCBI Taxonomy" id="83332"/>
    <lineage>
        <taxon>Bacteria</taxon>
        <taxon>Bacillati</taxon>
        <taxon>Actinomycetota</taxon>
        <taxon>Actinomycetes</taxon>
        <taxon>Mycobacteriales</taxon>
        <taxon>Mycobacteriaceae</taxon>
        <taxon>Mycobacterium</taxon>
        <taxon>Mycobacterium tuberculosis complex</taxon>
    </lineage>
</organism>
<evidence type="ECO:0000255" key="1">
    <source>
        <dbReference type="HAMAP-Rule" id="MF_00105"/>
    </source>
</evidence>
<evidence type="ECO:0000269" key="2">
    <source>
    </source>
</evidence>
<evidence type="ECO:0007744" key="3">
    <source>
    </source>
</evidence>
<protein>
    <recommendedName>
        <fullName evidence="1">Transcription elongation factor GreA</fullName>
    </recommendedName>
    <alternativeName>
        <fullName evidence="1">Transcript cleavage factor GreA</fullName>
    </alternativeName>
</protein>
<keyword id="KW-0007">Acetylation</keyword>
<keyword id="KW-0175">Coiled coil</keyword>
<keyword id="KW-0238">DNA-binding</keyword>
<keyword id="KW-1185">Reference proteome</keyword>
<keyword id="KW-0804">Transcription</keyword>
<keyword id="KW-0805">Transcription regulation</keyword>
<comment type="function">
    <text evidence="1">Necessary for efficient RNA polymerase transcription elongation past template-encoded arresting sites. The arresting sites in DNA have the property of trapping a certain fraction of elongating RNA polymerases that pass through, resulting in locked ternary complexes. Cleavage of the nascent transcript by cleavage factors such as GreA or GreB allows the resumption of elongation from the new 3'terminus. GreA releases sequences of 2 to 3 nucleotides.</text>
</comment>
<comment type="similarity">
    <text evidence="1">Belongs to the GreA/GreB family.</text>
</comment>
<dbReference type="EMBL" id="AL123456">
    <property type="protein sequence ID" value="CCP43831.1"/>
    <property type="molecule type" value="Genomic_DNA"/>
</dbReference>
<dbReference type="PIR" id="F70894">
    <property type="entry name" value="F70894"/>
</dbReference>
<dbReference type="RefSeq" id="NP_215596.1">
    <property type="nucleotide sequence ID" value="NC_000962.3"/>
</dbReference>
<dbReference type="RefSeq" id="WP_003405742.1">
    <property type="nucleotide sequence ID" value="NZ_NVQJ01000080.1"/>
</dbReference>
<dbReference type="SMR" id="P9WMT9"/>
<dbReference type="FunCoup" id="P9WMT9">
    <property type="interactions" value="29"/>
</dbReference>
<dbReference type="STRING" id="83332.Rv1080c"/>
<dbReference type="iPTMnet" id="P9WMT9"/>
<dbReference type="PaxDb" id="83332-Rv1080c"/>
<dbReference type="DNASU" id="887115"/>
<dbReference type="GeneID" id="45425053"/>
<dbReference type="GeneID" id="887115"/>
<dbReference type="KEGG" id="mtu:Rv1080c"/>
<dbReference type="KEGG" id="mtv:RVBD_1080c"/>
<dbReference type="TubercuList" id="Rv1080c"/>
<dbReference type="eggNOG" id="COG0782">
    <property type="taxonomic scope" value="Bacteria"/>
</dbReference>
<dbReference type="InParanoid" id="P9WMT9"/>
<dbReference type="OrthoDB" id="9797227at2"/>
<dbReference type="PhylomeDB" id="P9WMT9"/>
<dbReference type="Proteomes" id="UP000001584">
    <property type="component" value="Chromosome"/>
</dbReference>
<dbReference type="GO" id="GO:0005829">
    <property type="term" value="C:cytosol"/>
    <property type="evidence" value="ECO:0007005"/>
    <property type="project" value="MTBBASE"/>
</dbReference>
<dbReference type="GO" id="GO:0009274">
    <property type="term" value="C:peptidoglycan-based cell wall"/>
    <property type="evidence" value="ECO:0007005"/>
    <property type="project" value="MTBBASE"/>
</dbReference>
<dbReference type="GO" id="GO:0005886">
    <property type="term" value="C:plasma membrane"/>
    <property type="evidence" value="ECO:0007005"/>
    <property type="project" value="MTBBASE"/>
</dbReference>
<dbReference type="GO" id="GO:0003677">
    <property type="term" value="F:DNA binding"/>
    <property type="evidence" value="ECO:0007669"/>
    <property type="project" value="UniProtKB-UniRule"/>
</dbReference>
<dbReference type="GO" id="GO:0070063">
    <property type="term" value="F:RNA polymerase binding"/>
    <property type="evidence" value="ECO:0007669"/>
    <property type="project" value="InterPro"/>
</dbReference>
<dbReference type="GO" id="GO:0006354">
    <property type="term" value="P:DNA-templated transcription elongation"/>
    <property type="evidence" value="ECO:0000318"/>
    <property type="project" value="GO_Central"/>
</dbReference>
<dbReference type="GO" id="GO:0032784">
    <property type="term" value="P:regulation of DNA-templated transcription elongation"/>
    <property type="evidence" value="ECO:0007669"/>
    <property type="project" value="UniProtKB-UniRule"/>
</dbReference>
<dbReference type="GO" id="GO:0046677">
    <property type="term" value="P:response to antibiotic"/>
    <property type="evidence" value="ECO:0000270"/>
    <property type="project" value="MTBBASE"/>
</dbReference>
<dbReference type="FunFam" id="1.10.287.180:FF:000001">
    <property type="entry name" value="Transcription elongation factor GreA"/>
    <property type="match status" value="1"/>
</dbReference>
<dbReference type="FunFam" id="3.10.50.30:FF:000003">
    <property type="entry name" value="Transcription elongation factor GreA"/>
    <property type="match status" value="1"/>
</dbReference>
<dbReference type="Gene3D" id="3.10.50.30">
    <property type="entry name" value="Transcription elongation factor, GreA/GreB, C-terminal domain"/>
    <property type="match status" value="1"/>
</dbReference>
<dbReference type="Gene3D" id="1.10.287.180">
    <property type="entry name" value="Transcription elongation factor, GreA/GreB, N-terminal domain"/>
    <property type="match status" value="1"/>
</dbReference>
<dbReference type="HAMAP" id="MF_00105">
    <property type="entry name" value="GreA_GreB"/>
    <property type="match status" value="1"/>
</dbReference>
<dbReference type="InterPro" id="IPR036953">
    <property type="entry name" value="GreA/GreB_C_sf"/>
</dbReference>
<dbReference type="InterPro" id="IPR018151">
    <property type="entry name" value="TF_GreA/GreB_CS"/>
</dbReference>
<dbReference type="InterPro" id="IPR006359">
    <property type="entry name" value="Tscrpt_elong_fac_GreA"/>
</dbReference>
<dbReference type="InterPro" id="IPR028624">
    <property type="entry name" value="Tscrpt_elong_fac_GreA/B"/>
</dbReference>
<dbReference type="InterPro" id="IPR001437">
    <property type="entry name" value="Tscrpt_elong_fac_GreA/B_C"/>
</dbReference>
<dbReference type="InterPro" id="IPR023459">
    <property type="entry name" value="Tscrpt_elong_fac_GreA/B_fam"/>
</dbReference>
<dbReference type="InterPro" id="IPR022691">
    <property type="entry name" value="Tscrpt_elong_fac_GreA/B_N"/>
</dbReference>
<dbReference type="InterPro" id="IPR036805">
    <property type="entry name" value="Tscrpt_elong_fac_GreA/B_N_sf"/>
</dbReference>
<dbReference type="NCBIfam" id="TIGR01462">
    <property type="entry name" value="greA"/>
    <property type="match status" value="1"/>
</dbReference>
<dbReference type="NCBIfam" id="NF001262">
    <property type="entry name" value="PRK00226.1-3"/>
    <property type="match status" value="1"/>
</dbReference>
<dbReference type="PANTHER" id="PTHR30437">
    <property type="entry name" value="TRANSCRIPTION ELONGATION FACTOR GREA"/>
    <property type="match status" value="1"/>
</dbReference>
<dbReference type="PANTHER" id="PTHR30437:SF4">
    <property type="entry name" value="TRANSCRIPTION ELONGATION FACTOR GREA"/>
    <property type="match status" value="1"/>
</dbReference>
<dbReference type="Pfam" id="PF01272">
    <property type="entry name" value="GreA_GreB"/>
    <property type="match status" value="1"/>
</dbReference>
<dbReference type="Pfam" id="PF03449">
    <property type="entry name" value="GreA_GreB_N"/>
    <property type="match status" value="1"/>
</dbReference>
<dbReference type="PIRSF" id="PIRSF006092">
    <property type="entry name" value="GreA_GreB"/>
    <property type="match status" value="1"/>
</dbReference>
<dbReference type="SUPFAM" id="SSF54534">
    <property type="entry name" value="FKBP-like"/>
    <property type="match status" value="1"/>
</dbReference>
<dbReference type="SUPFAM" id="SSF46557">
    <property type="entry name" value="GreA transcript cleavage protein, N-terminal domain"/>
    <property type="match status" value="1"/>
</dbReference>
<dbReference type="PROSITE" id="PS00829">
    <property type="entry name" value="GREAB_1"/>
    <property type="match status" value="1"/>
</dbReference>
<dbReference type="PROSITE" id="PS00830">
    <property type="entry name" value="GREAB_2"/>
    <property type="match status" value="1"/>
</dbReference>
<name>GREA_MYCTU</name>
<proteinExistence type="evidence at protein level"/>
<feature type="initiator methionine" description="Removed" evidence="2 3">
    <location>
        <position position="1"/>
    </location>
</feature>
<feature type="chain" id="PRO_0000176943" description="Transcription elongation factor GreA">
    <location>
        <begin position="2"/>
        <end position="164"/>
    </location>
</feature>
<feature type="coiled-coil region" evidence="1">
    <location>
        <begin position="50"/>
        <end position="76"/>
    </location>
</feature>
<feature type="modified residue" description="N-acetylthreonine" evidence="3">
    <location>
        <position position="2"/>
    </location>
</feature>
<reference key="1">
    <citation type="journal article" date="1998" name="Nature">
        <title>Deciphering the biology of Mycobacterium tuberculosis from the complete genome sequence.</title>
        <authorList>
            <person name="Cole S.T."/>
            <person name="Brosch R."/>
            <person name="Parkhill J."/>
            <person name="Garnier T."/>
            <person name="Churcher C.M."/>
            <person name="Harris D.E."/>
            <person name="Gordon S.V."/>
            <person name="Eiglmeier K."/>
            <person name="Gas S."/>
            <person name="Barry C.E. III"/>
            <person name="Tekaia F."/>
            <person name="Badcock K."/>
            <person name="Basham D."/>
            <person name="Brown D."/>
            <person name="Chillingworth T."/>
            <person name="Connor R."/>
            <person name="Davies R.M."/>
            <person name="Devlin K."/>
            <person name="Feltwell T."/>
            <person name="Gentles S."/>
            <person name="Hamlin N."/>
            <person name="Holroyd S."/>
            <person name="Hornsby T."/>
            <person name="Jagels K."/>
            <person name="Krogh A."/>
            <person name="McLean J."/>
            <person name="Moule S."/>
            <person name="Murphy L.D."/>
            <person name="Oliver S."/>
            <person name="Osborne J."/>
            <person name="Quail M.A."/>
            <person name="Rajandream M.A."/>
            <person name="Rogers J."/>
            <person name="Rutter S."/>
            <person name="Seeger K."/>
            <person name="Skelton S."/>
            <person name="Squares S."/>
            <person name="Squares R."/>
            <person name="Sulston J.E."/>
            <person name="Taylor K."/>
            <person name="Whitehead S."/>
            <person name="Barrell B.G."/>
        </authorList>
    </citation>
    <scope>NUCLEOTIDE SEQUENCE [LARGE SCALE GENOMIC DNA]</scope>
    <source>
        <strain>ATCC 25618 / H37Rv</strain>
    </source>
</reference>
<reference key="2">
    <citation type="journal article" date="2007" name="Microbiology">
        <title>Experimental determination of translational starts using peptide mass mapping and tandem mass spectrometry within the proteome of Mycobacterium tuberculosis.</title>
        <authorList>
            <person name="Rison S.C."/>
            <person name="Mattow J."/>
            <person name="Jungblut P.R."/>
            <person name="Stoker N.G."/>
        </authorList>
    </citation>
    <scope>IDENTIFICATION BY MASS SPECTROMETRY</scope>
    <scope>DETERMINATION OF TRANSLATIONAL START SITE</scope>
    <scope>CLEAVAGE OF INITIATOR METHIONINE</scope>
    <source>
        <strain>ATCC 25618 / H37Rv</strain>
    </source>
</reference>
<reference key="3">
    <citation type="journal article" date="2011" name="Mol. Cell. Proteomics">
        <title>Proteogenomic analysis of Mycobacterium tuberculosis by high resolution mass spectrometry.</title>
        <authorList>
            <person name="Kelkar D.S."/>
            <person name="Kumar D."/>
            <person name="Kumar P."/>
            <person name="Balakrishnan L."/>
            <person name="Muthusamy B."/>
            <person name="Yadav A.K."/>
            <person name="Shrivastava P."/>
            <person name="Marimuthu A."/>
            <person name="Anand S."/>
            <person name="Sundaram H."/>
            <person name="Kingsbury R."/>
            <person name="Harsha H.C."/>
            <person name="Nair B."/>
            <person name="Prasad T.S."/>
            <person name="Chauhan D.S."/>
            <person name="Katoch K."/>
            <person name="Katoch V.M."/>
            <person name="Kumar P."/>
            <person name="Chaerkady R."/>
            <person name="Ramachandran S."/>
            <person name="Dash D."/>
            <person name="Pandey A."/>
        </authorList>
    </citation>
    <scope>ACETYLATION [LARGE SCALE ANALYSIS] AT THR-2</scope>
    <scope>CLEAVAGE OF INITIATOR METHIONINE [LARGE SCALE ANALYSIS]</scope>
    <scope>IDENTIFICATION BY MASS SPECTROMETRY [LARGE SCALE ANALYSIS]</scope>
    <source>
        <strain>ATCC 25618 / H37Rv</strain>
    </source>
</reference>
<accession>P9WMT9</accession>
<accession>L0T5S2</accession>
<accession>O53428</accession>
<accession>P64279</accession>
<sequence>MTDTQVTWLTQESHDRLKAELDQLIANRPVIAAEINDRREEGDLRENGGYHAAREEQGQQEARIRQLQDLLSNAKVGEAPKQSGVALPGSVVKVYYNGDKSDSETFLIATRQEGVSDGKLEVYSPNSPLGGALIDAKVGETRSYTVPNGSTVSVTLVSAEPYHS</sequence>